<gene>
    <name evidence="1" type="primary">rplS</name>
    <name evidence="1" type="synonym">rpl19</name>
    <name type="ordered locus">UU566</name>
</gene>
<sequence length="123" mass="13983">MALFKINKGEIMNFVNSTQLKTDIPNFDSGDTIIVHNRIVEGKKSRIQKFEGVVLRRRGSGSSETVIVRKESSGIGVEQSFNIHSPLVEKIEVIKYGKVRRAYISYMRNRSGKSARIKELNKQ</sequence>
<evidence type="ECO:0000255" key="1">
    <source>
        <dbReference type="HAMAP-Rule" id="MF_00402"/>
    </source>
</evidence>
<evidence type="ECO:0000305" key="2"/>
<organism>
    <name type="scientific">Ureaplasma parvum serovar 3 (strain ATCC 700970)</name>
    <dbReference type="NCBI Taxonomy" id="273119"/>
    <lineage>
        <taxon>Bacteria</taxon>
        <taxon>Bacillati</taxon>
        <taxon>Mycoplasmatota</taxon>
        <taxon>Mycoplasmoidales</taxon>
        <taxon>Mycoplasmoidaceae</taxon>
        <taxon>Ureaplasma</taxon>
    </lineage>
</organism>
<accession>Q9PPS3</accession>
<keyword id="KW-1185">Reference proteome</keyword>
<keyword id="KW-0687">Ribonucleoprotein</keyword>
<keyword id="KW-0689">Ribosomal protein</keyword>
<dbReference type="EMBL" id="AF222894">
    <property type="protein sequence ID" value="AAF30980.1"/>
    <property type="molecule type" value="Genomic_DNA"/>
</dbReference>
<dbReference type="RefSeq" id="WP_006688591.1">
    <property type="nucleotide sequence ID" value="NC_002162.1"/>
</dbReference>
<dbReference type="SMR" id="Q9PPS3"/>
<dbReference type="STRING" id="273119.UU566"/>
<dbReference type="EnsemblBacteria" id="AAF30980">
    <property type="protein sequence ID" value="AAF30980"/>
    <property type="gene ID" value="UU566"/>
</dbReference>
<dbReference type="GeneID" id="29672701"/>
<dbReference type="KEGG" id="uur:UU566"/>
<dbReference type="eggNOG" id="COG0335">
    <property type="taxonomic scope" value="Bacteria"/>
</dbReference>
<dbReference type="HOGENOM" id="CLU_103507_2_2_14"/>
<dbReference type="OrthoDB" id="9803541at2"/>
<dbReference type="Proteomes" id="UP000000423">
    <property type="component" value="Chromosome"/>
</dbReference>
<dbReference type="GO" id="GO:0022625">
    <property type="term" value="C:cytosolic large ribosomal subunit"/>
    <property type="evidence" value="ECO:0007669"/>
    <property type="project" value="TreeGrafter"/>
</dbReference>
<dbReference type="GO" id="GO:0003735">
    <property type="term" value="F:structural constituent of ribosome"/>
    <property type="evidence" value="ECO:0007669"/>
    <property type="project" value="InterPro"/>
</dbReference>
<dbReference type="GO" id="GO:0006412">
    <property type="term" value="P:translation"/>
    <property type="evidence" value="ECO:0007669"/>
    <property type="project" value="UniProtKB-UniRule"/>
</dbReference>
<dbReference type="Gene3D" id="2.30.30.790">
    <property type="match status" value="1"/>
</dbReference>
<dbReference type="HAMAP" id="MF_00402">
    <property type="entry name" value="Ribosomal_bL19"/>
    <property type="match status" value="1"/>
</dbReference>
<dbReference type="InterPro" id="IPR001857">
    <property type="entry name" value="Ribosomal_bL19"/>
</dbReference>
<dbReference type="InterPro" id="IPR018257">
    <property type="entry name" value="Ribosomal_bL19_CS"/>
</dbReference>
<dbReference type="InterPro" id="IPR038657">
    <property type="entry name" value="Ribosomal_bL19_sf"/>
</dbReference>
<dbReference type="InterPro" id="IPR008991">
    <property type="entry name" value="Translation_prot_SH3-like_sf"/>
</dbReference>
<dbReference type="NCBIfam" id="TIGR01024">
    <property type="entry name" value="rplS_bact"/>
    <property type="match status" value="1"/>
</dbReference>
<dbReference type="PANTHER" id="PTHR15680:SF9">
    <property type="entry name" value="LARGE RIBOSOMAL SUBUNIT PROTEIN BL19M"/>
    <property type="match status" value="1"/>
</dbReference>
<dbReference type="PANTHER" id="PTHR15680">
    <property type="entry name" value="RIBOSOMAL PROTEIN L19"/>
    <property type="match status" value="1"/>
</dbReference>
<dbReference type="Pfam" id="PF01245">
    <property type="entry name" value="Ribosomal_L19"/>
    <property type="match status" value="1"/>
</dbReference>
<dbReference type="PIRSF" id="PIRSF002191">
    <property type="entry name" value="Ribosomal_L19"/>
    <property type="match status" value="1"/>
</dbReference>
<dbReference type="PRINTS" id="PR00061">
    <property type="entry name" value="RIBOSOMALL19"/>
</dbReference>
<dbReference type="SUPFAM" id="SSF50104">
    <property type="entry name" value="Translation proteins SH3-like domain"/>
    <property type="match status" value="1"/>
</dbReference>
<dbReference type="PROSITE" id="PS01015">
    <property type="entry name" value="RIBOSOMAL_L19"/>
    <property type="match status" value="1"/>
</dbReference>
<reference key="1">
    <citation type="journal article" date="2000" name="Nature">
        <title>The complete sequence of the mucosal pathogen Ureaplasma urealyticum.</title>
        <authorList>
            <person name="Glass J.I."/>
            <person name="Lefkowitz E.J."/>
            <person name="Glass J.S."/>
            <person name="Heiner C.R."/>
            <person name="Chen E.Y."/>
            <person name="Cassell G.H."/>
        </authorList>
    </citation>
    <scope>NUCLEOTIDE SEQUENCE [LARGE SCALE GENOMIC DNA]</scope>
    <source>
        <strain>ATCC 700970</strain>
    </source>
</reference>
<proteinExistence type="inferred from homology"/>
<comment type="function">
    <text evidence="1">This protein is located at the 30S-50S ribosomal subunit interface and may play a role in the structure and function of the aminoacyl-tRNA binding site.</text>
</comment>
<comment type="similarity">
    <text evidence="1">Belongs to the bacterial ribosomal protein bL19 family.</text>
</comment>
<feature type="chain" id="PRO_0000163564" description="Large ribosomal subunit protein bL19">
    <location>
        <begin position="1"/>
        <end position="123"/>
    </location>
</feature>
<name>RL19_UREPA</name>
<protein>
    <recommendedName>
        <fullName evidence="1">Large ribosomal subunit protein bL19</fullName>
    </recommendedName>
    <alternativeName>
        <fullName evidence="2">50S ribosomal protein L19</fullName>
    </alternativeName>
</protein>